<comment type="function">
    <text evidence="1">The aspartyl protease activity mediates proteolytic cleavages of Gag and Pol polyproteins. The reverse transcriptase (RT) activity converts the viral RNA genome into dsDNA in the cytoplasm, shortly after virus entry into the cell (early reverse transcription) or after proviral DNA transcription (late reverse transcription). RT consists of a DNA polymerase activity that can copy either DNA or RNA templates, and a ribonuclease H (RNase H) activity that cleaves the RNA strand of RNA-DNA heteroduplexes in a partially processive 3' to 5' endonucleasic mode. Conversion of viral genomic RNA into dsDNA requires many steps. A tRNA-Lys1,2 binds to the primer-binding site (PBS) situated at the 5'-end of the viral RNA. RT uses the 3' end of the tRNA primer to perform a short round of RNA-dependent minus-strand DNA synthesis. The reading proceeds through the U5 region and ends after the repeated (R) region which is present at both ends of viral RNA. The portion of the RNA-DNA heteroduplex is digested by the RNase H, resulting in a ssDNA product attached to the tRNA primer. This ssDNA/tRNA hybridizes with the identical R region situated at the 3' end of viral RNA. This template exchange, known as minus-strand DNA strong stop transfer, can be either intra- or intermolecular. RT uses the 3' end of this newly synthesized short ssDNA to perform the RNA-dependent minus-strand DNA synthesis of the whole template. RNase H digests the RNA template except for a polypurine tract (PPT) situated at the 5'-end and near the center of the genome. It is not clear if both polymerase and RNase H activities are simultaneous. RNase H probably can proceed both in a polymerase-dependent (RNA cut into small fragments by the same RT performing DNA synthesis) and a polymerase-independent mode (cleavage of remaining RNA fragments by free RTs). Secondly, RT performs DNA-directed plus-strand DNA synthesis using the PPT that has not been removed by RNase H as primer. PPT and tRNA primers are then removed by RNase H. The 3' and 5' ssDNA PBS regions hybridize to form a circular dsDNA intermediate. Strand displacement synthesis by RT to the PBS and PPT ends produces a blunt ended, linear dsDNA copy of the viral genome that includes long terminal repeats (LTRs) at both ends (By similarity).</text>
</comment>
<comment type="function">
    <text evidence="1">Integrase catalyzes viral DNA integration into the host chromosome, by performing a series of DNA cutting and joining reactions. This enzyme activity takes place after virion entry into a cell and reverse transcription of the RNA genome in dsDNA. The first step in the integration process is 3' processing. This step requires a complex comprising at least the viral genome, matrix protein, and integrase. This complex is called the pre-integration complex (PIC). The integrase protein removes 2 nucleotides from the 3' end of the viral DNA right (U5) end, leaving the left (U3) intact. In the second step, the PIC enters cell nucleus. This process is mediated through the integrase and allows the virus to infect both dividing (nuclear membrane disassembled) and G1/S-arrested cells (active translocation), but with no viral gene expression in the latter. In the third step, termed strand transfer, the integrase protein joins the previously processed 3' ends to the 5' ends of strands of target cellular DNA at the site of integration. It is however not clear how integration then proceeds to resolve the asymmetrical cleavage of viral DNA (By similarity).</text>
</comment>
<comment type="catalytic activity">
    <reaction evidence="3">
        <text>Endonucleolytic cleavage to 5'-phosphomonoester.</text>
        <dbReference type="EC" id="3.1.26.4"/>
    </reaction>
</comment>
<comment type="catalytic activity">
    <reaction evidence="2">
        <text>DNA(n) + a 2'-deoxyribonucleoside 5'-triphosphate = DNA(n+1) + diphosphate</text>
        <dbReference type="Rhea" id="RHEA:22508"/>
        <dbReference type="Rhea" id="RHEA-COMP:17339"/>
        <dbReference type="Rhea" id="RHEA-COMP:17340"/>
        <dbReference type="ChEBI" id="CHEBI:33019"/>
        <dbReference type="ChEBI" id="CHEBI:61560"/>
        <dbReference type="ChEBI" id="CHEBI:173112"/>
        <dbReference type="EC" id="2.7.7.49"/>
    </reaction>
</comment>
<comment type="catalytic activity">
    <reaction evidence="2">
        <text>DNA(n) + a 2'-deoxyribonucleoside 5'-triphosphate = DNA(n+1) + diphosphate</text>
        <dbReference type="Rhea" id="RHEA:22508"/>
        <dbReference type="Rhea" id="RHEA-COMP:17339"/>
        <dbReference type="Rhea" id="RHEA-COMP:17340"/>
        <dbReference type="ChEBI" id="CHEBI:33019"/>
        <dbReference type="ChEBI" id="CHEBI:61560"/>
        <dbReference type="ChEBI" id="CHEBI:173112"/>
        <dbReference type="EC" id="2.7.7.7"/>
    </reaction>
</comment>
<comment type="cofactor">
    <cofactor evidence="1">
        <name>Mg(2+)</name>
        <dbReference type="ChEBI" id="CHEBI:18420"/>
    </cofactor>
    <text evidence="1">Binds 2 magnesium ions for reverse transcriptase polymerase activity.</text>
</comment>
<comment type="cofactor">
    <cofactor evidence="1">
        <name>Mg(2+)</name>
        <dbReference type="ChEBI" id="CHEBI:18420"/>
    </cofactor>
    <text evidence="1">Binds 2 magnesium ions for ribonuclease H (RNase H) activity. Substrate-binding is a precondition for magnesium binding.</text>
</comment>
<comment type="cofactor">
    <cofactor evidence="1">
        <name>Mg(2+)</name>
        <dbReference type="ChEBI" id="CHEBI:18420"/>
    </cofactor>
    <text evidence="1">Magnesium ions are required for integrase activity. Binds at least 1, maybe 2 magnesium ions.</text>
</comment>
<comment type="subunit">
    <text evidence="5">The protease is a homodimer, whose active site consists of two apposed aspartic acid residues.</text>
</comment>
<comment type="subcellular location">
    <molecule>Integrase</molecule>
    <subcellularLocation>
        <location evidence="7">Virion</location>
    </subcellularLocation>
    <subcellularLocation>
        <location>Host nucleus</location>
    </subcellularLocation>
    <subcellularLocation>
        <location evidence="7">Host cytoplasm</location>
    </subcellularLocation>
    <text evidence="7">Nuclear at initial phase, cytoplasmic at assembly.</text>
</comment>
<comment type="subcellular location">
    <molecule>Protease/Reverse transcriptase/ribonuclease H</molecule>
    <subcellularLocation>
        <location evidence="1">Host nucleus</location>
    </subcellularLocation>
    <subcellularLocation>
        <location evidence="7">Host cytoplasm</location>
    </subcellularLocation>
    <text evidence="7">Nuclear at initial phase, cytoplasmic at assembly.</text>
</comment>
<comment type="domain">
    <text evidence="1">The reverse transcriptase/ribonuclease H (RT) is structured in five subdomains: finger, palm, thumb, connection and RNase H. Within the palm subdomain, the 'primer grip' region is thought to be involved in the positioning of the primer terminus for accommodating the incoming nucleotide. The RNase H domain stabilizes the association of RT with primer-template (By similarity).</text>
</comment>
<comment type="domain">
    <text evidence="1">Integrase core domain contains the D-x(n)-D-x(35)-E motif, named for the phylogenetically conserved glutamic acid and aspartic acid residues and the invariant 35 amino acid spacing between the second and third acidic residues. Each acidic residue of the D,D(35)E motif is independently essential for the 3'-processing and strand transfer activities of purified integrase protein (By similarity).</text>
</comment>
<comment type="PTM">
    <text evidence="1">Specific enzymatic cleavages in vivo by viral protease yield mature proteins. The protease is not cleaved off from Pol. Since cleavage efficiency is not optimal for all sites, long and active p65Pro-RT, p87Pro-RT-RNaseH and even some Pr125Pol are detected in infected cells (By similarity).</text>
</comment>
<comment type="miscellaneous">
    <text>The reverse transcriptase is an error-prone enzyme that lacks a proof-reading function. High mutations rate is a direct consequence of this characteristic. RT also displays frequent template switching leading to high recombination rate. Recombination mostly occurs between homologous regions of the two copackaged RNA genomes. If these two RNA molecules derive from different viral strains, reverse transcription will give rise to highly recombinated proviral DNAs.</text>
</comment>
<comment type="miscellaneous">
    <text>Foamy viruses are distinct from other retroviruses in many respects. Their protease is active as an uncleaved Pro-Pol protein. Mature particles do not include the usual processed retroviral structural protein (MA, CA and NC), but instead contain two large Gag proteins. Their functional nucleic acid appears to be either RNA or dsDNA (up to 20% of extracellular particles), because they probably proceed either to an early (before integration) or late reverse transcription (after assembly). Foamy viruses have the ability to retrotranspose intracellularly with high efficiency. They bud predominantly into the endoplasmic reticulum (ER) and occasionally at the plasma membrane. Budding requires the presence of Env proteins. Most viral particles probably remain within the infected cell.</text>
</comment>
<organismHost>
    <name type="scientific">Pan troglodytes</name>
    <name type="common">Chimpanzee</name>
    <dbReference type="NCBI Taxonomy" id="9598"/>
</organismHost>
<evidence type="ECO:0000250" key="1"/>
<evidence type="ECO:0000255" key="2">
    <source>
        <dbReference type="PROSITE-ProRule" id="PRU00405"/>
    </source>
</evidence>
<evidence type="ECO:0000255" key="3">
    <source>
        <dbReference type="PROSITE-ProRule" id="PRU00408"/>
    </source>
</evidence>
<evidence type="ECO:0000255" key="4">
    <source>
        <dbReference type="PROSITE-ProRule" id="PRU00457"/>
    </source>
</evidence>
<evidence type="ECO:0000255" key="5">
    <source>
        <dbReference type="PROSITE-ProRule" id="PRU00863"/>
    </source>
</evidence>
<evidence type="ECO:0000256" key="6">
    <source>
        <dbReference type="SAM" id="MobiDB-lite"/>
    </source>
</evidence>
<evidence type="ECO:0000305" key="7"/>
<evidence type="ECO:0000305" key="8">
    <source>
    </source>
</evidence>
<feature type="chain" id="PRO_0000378594" description="Pro-Pol polyprotein">
    <location>
        <begin position="1"/>
        <end position="1146"/>
    </location>
</feature>
<feature type="chain" id="PRO_0000378595" description="Protease/Reverse transcriptase/ribonuclease H" evidence="1">
    <location>
        <begin position="1"/>
        <end position="751"/>
    </location>
</feature>
<feature type="chain" id="PRO_0000378596" description="Protease/Reverse transcriptase" evidence="1">
    <location>
        <begin position="1"/>
        <end position="596"/>
    </location>
</feature>
<feature type="chain" id="PRO_0000378597" description="Ribonuclease H" evidence="1">
    <location>
        <begin position="597"/>
        <end position="751"/>
    </location>
</feature>
<feature type="chain" id="PRO_0000378598" description="Integrase" evidence="1">
    <location>
        <begin position="752"/>
        <end position="1143"/>
    </location>
</feature>
<feature type="domain" description="Peptidase A9" evidence="5">
    <location>
        <begin position="1"/>
        <end position="143"/>
    </location>
</feature>
<feature type="domain" description="Reverse transcriptase" evidence="2">
    <location>
        <begin position="198"/>
        <end position="363"/>
    </location>
</feature>
<feature type="domain" description="RNase H type-1" evidence="3">
    <location>
        <begin position="590"/>
        <end position="748"/>
    </location>
</feature>
<feature type="domain" description="Integrase catalytic" evidence="4">
    <location>
        <begin position="868"/>
        <end position="1024"/>
    </location>
</feature>
<feature type="region of interest" description="Disordered" evidence="6">
    <location>
        <begin position="1114"/>
        <end position="1146"/>
    </location>
</feature>
<feature type="compositionally biased region" description="Polar residues" evidence="6">
    <location>
        <begin position="1114"/>
        <end position="1134"/>
    </location>
</feature>
<feature type="compositionally biased region" description="Basic and acidic residues" evidence="6">
    <location>
        <begin position="1135"/>
        <end position="1146"/>
    </location>
</feature>
<feature type="active site" description="For protease activity" evidence="5">
    <location>
        <position position="24"/>
    </location>
</feature>
<feature type="binding site" evidence="1">
    <location>
        <position position="252"/>
    </location>
    <ligand>
        <name>Mg(2+)</name>
        <dbReference type="ChEBI" id="CHEBI:18420"/>
        <label>1</label>
        <note>catalytic; for reverse transcriptase activity</note>
    </ligand>
</feature>
<feature type="binding site" evidence="1">
    <location>
        <position position="314"/>
    </location>
    <ligand>
        <name>Mg(2+)</name>
        <dbReference type="ChEBI" id="CHEBI:18420"/>
        <label>1</label>
        <note>catalytic; for reverse transcriptase activity</note>
    </ligand>
</feature>
<feature type="binding site" evidence="1">
    <location>
        <position position="315"/>
    </location>
    <ligand>
        <name>Mg(2+)</name>
        <dbReference type="ChEBI" id="CHEBI:18420"/>
        <label>1</label>
        <note>catalytic; for reverse transcriptase activity</note>
    </ligand>
</feature>
<feature type="binding site" evidence="1">
    <location>
        <position position="599"/>
    </location>
    <ligand>
        <name>Mg(2+)</name>
        <dbReference type="ChEBI" id="CHEBI:18420"/>
        <label>2</label>
        <note>catalytic; for RNase H activity</note>
    </ligand>
</feature>
<feature type="binding site" evidence="1">
    <location>
        <position position="646"/>
    </location>
    <ligand>
        <name>Mg(2+)</name>
        <dbReference type="ChEBI" id="CHEBI:18420"/>
        <label>2</label>
        <note>catalytic; for RNase H activity</note>
    </ligand>
</feature>
<feature type="binding site" evidence="1">
    <location>
        <position position="669"/>
    </location>
    <ligand>
        <name>Mg(2+)</name>
        <dbReference type="ChEBI" id="CHEBI:18420"/>
        <label>2</label>
        <note>catalytic; for RNase H activity</note>
    </ligand>
</feature>
<feature type="binding site" evidence="1">
    <location>
        <position position="740"/>
    </location>
    <ligand>
        <name>Mg(2+)</name>
        <dbReference type="ChEBI" id="CHEBI:18420"/>
        <label>2</label>
        <note>catalytic; for RNase H activity</note>
    </ligand>
</feature>
<feature type="binding site" evidence="1">
    <location>
        <position position="874"/>
    </location>
    <ligand>
        <name>Mg(2+)</name>
        <dbReference type="ChEBI" id="CHEBI:18420"/>
        <label>3</label>
        <note>catalytic; for integrase activity</note>
    </ligand>
</feature>
<feature type="binding site" evidence="1">
    <location>
        <position position="936"/>
    </location>
    <ligand>
        <name>Mg(2+)</name>
        <dbReference type="ChEBI" id="CHEBI:18420"/>
        <label>3</label>
        <note>catalytic; for integrase activity</note>
    </ligand>
</feature>
<feature type="site" description="Cleavage; by viral protease; partial" evidence="1">
    <location>
        <begin position="596"/>
        <end position="597"/>
    </location>
</feature>
<feature type="site" description="Cleavage; by viral protease" evidence="1">
    <location>
        <begin position="751"/>
        <end position="752"/>
    </location>
</feature>
<proteinExistence type="inferred from homology"/>
<dbReference type="EC" id="2.7.7.49"/>
<dbReference type="EC" id="2.7.7.7"/>
<dbReference type="EC" id="3.1.26.4"/>
<dbReference type="EC" id="3.4.23.-"/>
<dbReference type="EC" id="2.7.7.-" evidence="8"/>
<dbReference type="EC" id="3.1.-.-" evidence="8"/>
<dbReference type="EMBL" id="U04327">
    <property type="protein sequence ID" value="AAA19978.1"/>
    <property type="molecule type" value="Genomic_DNA"/>
</dbReference>
<dbReference type="RefSeq" id="NP_056803.1">
    <property type="nucleotide sequence ID" value="NC_001364.1"/>
</dbReference>
<dbReference type="SMR" id="Q87040"/>
<dbReference type="MEROPS" id="A09.001"/>
<dbReference type="GeneID" id="1489965"/>
<dbReference type="KEGG" id="vg:1489965"/>
<dbReference type="Proteomes" id="UP000001063">
    <property type="component" value="Segment"/>
</dbReference>
<dbReference type="GO" id="GO:0043657">
    <property type="term" value="C:host cell"/>
    <property type="evidence" value="ECO:0007669"/>
    <property type="project" value="GOC"/>
</dbReference>
<dbReference type="GO" id="GO:0030430">
    <property type="term" value="C:host cell cytoplasm"/>
    <property type="evidence" value="ECO:0007669"/>
    <property type="project" value="UniProtKB-SubCell"/>
</dbReference>
<dbReference type="GO" id="GO:0042025">
    <property type="term" value="C:host cell nucleus"/>
    <property type="evidence" value="ECO:0007669"/>
    <property type="project" value="UniProtKB-SubCell"/>
</dbReference>
<dbReference type="GO" id="GO:0044423">
    <property type="term" value="C:virion component"/>
    <property type="evidence" value="ECO:0007669"/>
    <property type="project" value="UniProtKB-KW"/>
</dbReference>
<dbReference type="GO" id="GO:0004190">
    <property type="term" value="F:aspartic-type endopeptidase activity"/>
    <property type="evidence" value="ECO:0007669"/>
    <property type="project" value="UniProtKB-KW"/>
</dbReference>
<dbReference type="GO" id="GO:0003887">
    <property type="term" value="F:DNA-directed DNA polymerase activity"/>
    <property type="evidence" value="ECO:0007669"/>
    <property type="project" value="UniProtKB-KW"/>
</dbReference>
<dbReference type="GO" id="GO:0046872">
    <property type="term" value="F:metal ion binding"/>
    <property type="evidence" value="ECO:0007669"/>
    <property type="project" value="UniProtKB-KW"/>
</dbReference>
<dbReference type="GO" id="GO:0003723">
    <property type="term" value="F:RNA binding"/>
    <property type="evidence" value="ECO:0007669"/>
    <property type="project" value="UniProtKB-KW"/>
</dbReference>
<dbReference type="GO" id="GO:0003964">
    <property type="term" value="F:RNA-directed DNA polymerase activity"/>
    <property type="evidence" value="ECO:0007669"/>
    <property type="project" value="UniProtKB-KW"/>
</dbReference>
<dbReference type="GO" id="GO:0004523">
    <property type="term" value="F:RNA-DNA hybrid ribonuclease activity"/>
    <property type="evidence" value="ECO:0007669"/>
    <property type="project" value="UniProtKB-EC"/>
</dbReference>
<dbReference type="GO" id="GO:0015074">
    <property type="term" value="P:DNA integration"/>
    <property type="evidence" value="ECO:0007669"/>
    <property type="project" value="UniProtKB-KW"/>
</dbReference>
<dbReference type="GO" id="GO:0006310">
    <property type="term" value="P:DNA recombination"/>
    <property type="evidence" value="ECO:0007669"/>
    <property type="project" value="UniProtKB-KW"/>
</dbReference>
<dbReference type="GO" id="GO:0075713">
    <property type="term" value="P:establishment of integrated proviral latency"/>
    <property type="evidence" value="ECO:0007669"/>
    <property type="project" value="UniProtKB-KW"/>
</dbReference>
<dbReference type="GO" id="GO:0006508">
    <property type="term" value="P:proteolysis"/>
    <property type="evidence" value="ECO:0007669"/>
    <property type="project" value="UniProtKB-KW"/>
</dbReference>
<dbReference type="GO" id="GO:0046718">
    <property type="term" value="P:symbiont entry into host cell"/>
    <property type="evidence" value="ECO:0007669"/>
    <property type="project" value="UniProtKB-KW"/>
</dbReference>
<dbReference type="GO" id="GO:0044826">
    <property type="term" value="P:viral genome integration into host DNA"/>
    <property type="evidence" value="ECO:0007669"/>
    <property type="project" value="UniProtKB-KW"/>
</dbReference>
<dbReference type="GO" id="GO:0075732">
    <property type="term" value="P:viral penetration into host nucleus"/>
    <property type="evidence" value="ECO:0007669"/>
    <property type="project" value="UniProtKB-KW"/>
</dbReference>
<dbReference type="FunFam" id="2.40.70.10:FF:000193">
    <property type="entry name" value="Pro-Pol polyprotein"/>
    <property type="match status" value="1"/>
</dbReference>
<dbReference type="FunFam" id="3.30.420.10:FF:000263">
    <property type="entry name" value="Pro-Pol polyprotein"/>
    <property type="match status" value="1"/>
</dbReference>
<dbReference type="Gene3D" id="1.10.340.70">
    <property type="match status" value="1"/>
</dbReference>
<dbReference type="Gene3D" id="2.30.30.140">
    <property type="match status" value="1"/>
</dbReference>
<dbReference type="Gene3D" id="3.30.70.270">
    <property type="match status" value="2"/>
</dbReference>
<dbReference type="Gene3D" id="6.10.20.110">
    <property type="match status" value="1"/>
</dbReference>
<dbReference type="Gene3D" id="2.40.70.10">
    <property type="entry name" value="Acid Proteases"/>
    <property type="match status" value="1"/>
</dbReference>
<dbReference type="Gene3D" id="3.10.10.10">
    <property type="entry name" value="HIV Type 1 Reverse Transcriptase, subunit A, domain 1"/>
    <property type="match status" value="1"/>
</dbReference>
<dbReference type="Gene3D" id="3.30.420.10">
    <property type="entry name" value="Ribonuclease H-like superfamily/Ribonuclease H"/>
    <property type="match status" value="2"/>
</dbReference>
<dbReference type="InterPro" id="IPR043502">
    <property type="entry name" value="DNA/RNA_pol_sf"/>
</dbReference>
<dbReference type="InterPro" id="IPR001584">
    <property type="entry name" value="Integrase_cat-core"/>
</dbReference>
<dbReference type="InterPro" id="IPR041588">
    <property type="entry name" value="Integrase_H2C2"/>
</dbReference>
<dbReference type="InterPro" id="IPR021109">
    <property type="entry name" value="Peptidase_aspartic_dom_sf"/>
</dbReference>
<dbReference type="InterPro" id="IPR050951">
    <property type="entry name" value="Retrovirus_Pol_polyprotein"/>
</dbReference>
<dbReference type="InterPro" id="IPR043128">
    <property type="entry name" value="Rev_trsase/Diguanyl_cyclase"/>
</dbReference>
<dbReference type="InterPro" id="IPR012337">
    <property type="entry name" value="RNaseH-like_sf"/>
</dbReference>
<dbReference type="InterPro" id="IPR002156">
    <property type="entry name" value="RNaseH_domain"/>
</dbReference>
<dbReference type="InterPro" id="IPR036397">
    <property type="entry name" value="RNaseH_sf"/>
</dbReference>
<dbReference type="InterPro" id="IPR000477">
    <property type="entry name" value="RT_dom"/>
</dbReference>
<dbReference type="InterPro" id="IPR041577">
    <property type="entry name" value="RT_RNaseH_2"/>
</dbReference>
<dbReference type="InterPro" id="IPR040903">
    <property type="entry name" value="SH3_11"/>
</dbReference>
<dbReference type="InterPro" id="IPR001641">
    <property type="entry name" value="Spumavirus_A9"/>
</dbReference>
<dbReference type="PANTHER" id="PTHR37984">
    <property type="entry name" value="PROTEIN CBG26694"/>
    <property type="match status" value="1"/>
</dbReference>
<dbReference type="PANTHER" id="PTHR37984:SF5">
    <property type="entry name" value="PROTEIN NYNRIN-LIKE"/>
    <property type="match status" value="1"/>
</dbReference>
<dbReference type="Pfam" id="PF17921">
    <property type="entry name" value="Integrase_H2C2"/>
    <property type="match status" value="1"/>
</dbReference>
<dbReference type="Pfam" id="PF00075">
    <property type="entry name" value="RNase_H"/>
    <property type="match status" value="1"/>
</dbReference>
<dbReference type="Pfam" id="PF17919">
    <property type="entry name" value="RT_RNaseH_2"/>
    <property type="match status" value="1"/>
</dbReference>
<dbReference type="Pfam" id="PF00665">
    <property type="entry name" value="rve"/>
    <property type="match status" value="1"/>
</dbReference>
<dbReference type="Pfam" id="PF00078">
    <property type="entry name" value="RVT_1"/>
    <property type="match status" value="1"/>
</dbReference>
<dbReference type="Pfam" id="PF18103">
    <property type="entry name" value="SH3_11"/>
    <property type="match status" value="1"/>
</dbReference>
<dbReference type="Pfam" id="PF03539">
    <property type="entry name" value="Spuma_A9PTase"/>
    <property type="match status" value="1"/>
</dbReference>
<dbReference type="PRINTS" id="PR00920">
    <property type="entry name" value="SPUMVIRPTASE"/>
</dbReference>
<dbReference type="SUPFAM" id="SSF56672">
    <property type="entry name" value="DNA/RNA polymerases"/>
    <property type="match status" value="1"/>
</dbReference>
<dbReference type="SUPFAM" id="SSF53098">
    <property type="entry name" value="Ribonuclease H-like"/>
    <property type="match status" value="2"/>
</dbReference>
<dbReference type="PROSITE" id="PS51531">
    <property type="entry name" value="FV_PR"/>
    <property type="match status" value="1"/>
</dbReference>
<dbReference type="PROSITE" id="PS50994">
    <property type="entry name" value="INTEGRASE"/>
    <property type="match status" value="1"/>
</dbReference>
<dbReference type="PROSITE" id="PS50879">
    <property type="entry name" value="RNASE_H_1"/>
    <property type="match status" value="1"/>
</dbReference>
<dbReference type="PROSITE" id="PS50878">
    <property type="entry name" value="RT_POL"/>
    <property type="match status" value="1"/>
</dbReference>
<accession>Q87040</accession>
<keyword id="KW-0064">Aspartyl protease</keyword>
<keyword id="KW-0229">DNA integration</keyword>
<keyword id="KW-0233">DNA recombination</keyword>
<keyword id="KW-0239">DNA-directed DNA polymerase</keyword>
<keyword id="KW-0255">Endonuclease</keyword>
<keyword id="KW-1035">Host cytoplasm</keyword>
<keyword id="KW-1048">Host nucleus</keyword>
<keyword id="KW-0378">Hydrolase</keyword>
<keyword id="KW-0460">Magnesium</keyword>
<keyword id="KW-0479">Metal-binding</keyword>
<keyword id="KW-0511">Multifunctional enzyme</keyword>
<keyword id="KW-0540">Nuclease</keyword>
<keyword id="KW-0548">Nucleotidyltransferase</keyword>
<keyword id="KW-0645">Protease</keyword>
<keyword id="KW-1185">Reference proteome</keyword>
<keyword id="KW-0694">RNA-binding</keyword>
<keyword id="KW-0695">RNA-directed DNA polymerase</keyword>
<keyword id="KW-0808">Transferase</keyword>
<keyword id="KW-1179">Viral genome integration</keyword>
<keyword id="KW-1163">Viral penetration into host nucleus</keyword>
<keyword id="KW-0946">Virion</keyword>
<keyword id="KW-1160">Virus entry into host cell</keyword>
<protein>
    <recommendedName>
        <fullName>Pro-Pol polyprotein</fullName>
    </recommendedName>
    <alternativeName>
        <fullName>Pr125Pol</fullName>
    </alternativeName>
    <component>
        <recommendedName>
            <fullName>Protease/Reverse transcriptase/ribonuclease H</fullName>
            <ecNumber>2.7.7.49</ecNumber>
            <ecNumber>2.7.7.7</ecNumber>
            <ecNumber>3.1.26.4</ecNumber>
            <ecNumber>3.4.23.-</ecNumber>
        </recommendedName>
        <alternativeName>
            <fullName>p87Pro-RT-RNaseH</fullName>
        </alternativeName>
    </component>
    <component>
        <recommendedName>
            <fullName>Protease/Reverse transcriptase</fullName>
            <ecNumber>2.7.7.49</ecNumber>
            <ecNumber>2.7.7.7</ecNumber>
            <ecNumber>3.4.23.-</ecNumber>
        </recommendedName>
        <alternativeName>
            <fullName>p65Pro-RT</fullName>
        </alternativeName>
    </component>
    <component>
        <recommendedName>
            <fullName>Ribonuclease H</fullName>
            <shortName>RNase H</shortName>
            <ecNumber>3.1.26.4</ecNumber>
        </recommendedName>
    </component>
    <component>
        <recommendedName>
            <fullName>Integrase</fullName>
            <shortName>IN</shortName>
            <ecNumber evidence="8">2.7.7.-</ecNumber>
            <ecNumber evidence="8">3.1.-.-</ecNumber>
        </recommendedName>
        <alternativeName>
            <fullName>p42In</fullName>
        </alternativeName>
    </component>
</protein>
<reference key="1">
    <citation type="journal article" date="1994" name="Virology">
        <title>Isolation, cloning, and sequencing of simian foamy viruses from chimpanzees (SFVcpz): high homology to human foamy virus (HFV).</title>
        <authorList>
            <person name="Herchenroder O."/>
            <person name="Renne R."/>
            <person name="Loncar D."/>
            <person name="Cobb E.K."/>
            <person name="Murthy K.K."/>
            <person name="Schneider J."/>
            <person name="Mergia A."/>
            <person name="Luciw P.A."/>
        </authorList>
    </citation>
    <scope>NUCLEOTIDE SEQUENCE [GENOMIC DNA]</scope>
</reference>
<reference key="2">
    <citation type="journal article" date="2013" name="Viruses">
        <title>Structural and functional insights into foamy viral integrase.</title>
        <authorList>
            <person name="Hossain M.A."/>
            <person name="Ali M.K."/>
            <person name="Shin C.G."/>
        </authorList>
    </citation>
    <scope>FUNCTION (INTEGRASE)</scope>
</reference>
<sequence>MNPLQLLQPLPAEVKGTKLLAHWDSGATITCIPESFLEDEQPIKQTLIKTIHGEKQQNVYYLTFKVKGRKVEAEVIASPYEYILLSPTDVPWLTQQPLQLTILVPLQEYQDRILNKTALPEEQKQQLKALFTKYDNLWQHWENQVGHRKIRPHNIATGDYPPRPQKQYPINPKAKPSIQIVIDDLLKQGVLTPQNSTMNTPVYPVPKPDGRWRMVLDYREVNKTIPLTAAQNQHSAGILATIVRQKYKTTLDLANGFWAHPITPDSYWLTAFTWQGKQYCWTRLPQGFLNSPALFTADAVDLLKEVPNVQVYVDDIYLSHDNPHEHIQQLEKVFQILLQAGYVVSLKKSEIGQRTVEFLGFNITKEGRGLTDTFKTKLLNVTPPKDLKQLQSILGLLNFARNFIPNFAELVQTLYNLIASSKGKYIEWTEDNTKQLNKVIEALNTASNLEERLPDQRLVIKVNTSPSAGYVRYYNESGKKPIMYLNYVFSKAELKFSMLEKLLTTMHKALIKAMDLAMGQEILVYSPIVSMTKIQKTPLPERKALPIRWITWMTYLEDPRIQFHYDKTLPELKHIPDVYTSSIPPLKHPSQYEGVFCTDGSAIKSPDPTKSNNAGMGIVHAIYNPEYKILNQWSIPLGHHTAQMAEIAAVEFACKKALKVPGPVLVITDSFYVAESANKELPYWKSNGFVNNKKEPLKHISKWKSIAECLSIKPDITIQHEKGHQPINTSIHTEGNALADKLATQGSYVVNCNTKKPNLDAELDQLLQGNNVKGYPKQYTYYLEDGKVKVSRPEGVKIIPPQSDRQKIVLQAHNLAHTGREATLLKIANLYWWPNMRKDVVKQLGRCKQCLITNASNKTSGPILRPDRPQKPFDKFFIDYIGPLPPSQGYLYVLVIVDGMTGFTWLYPTKAPSTSATVKSLNVLTSIAIPKVIHSDQGAAFTSSTFAEWAKERGIHLEFSTPYHPQSSGKVERKNSDIKRLLTKLLVGRPTKWYDLLPVVQLALNNTYSPVLKYTPHQLLFGIDSNTPFANQDTLDLTREEELSLLQEIRASLYQPSTPPASSRSWSPVVGQLVQERVARPASLRPRWHKPSTVLEVLNPRTVVILDHLGNNRTVSIDNLKPTSHQNGTTNDTATMDHLEQNEQSS</sequence>
<name>POL_SFVCP</name>
<gene>
    <name type="primary">pol</name>
</gene>
<organism>
    <name type="scientific">Simian foamy virus (isolate chimpanzee)</name>
    <name type="common">SFVcpz</name>
    <dbReference type="NCBI Taxonomy" id="298339"/>
    <lineage>
        <taxon>Viruses</taxon>
        <taxon>Riboviria</taxon>
        <taxon>Pararnavirae</taxon>
        <taxon>Artverviricota</taxon>
        <taxon>Revtraviricetes</taxon>
        <taxon>Ortervirales</taxon>
        <taxon>Retroviridae</taxon>
        <taxon>Spumaretrovirinae</taxon>
        <taxon>Spumavirus</taxon>
        <taxon>Simian foamy virus</taxon>
    </lineage>
</organism>